<gene>
    <name evidence="1" type="primary">rex</name>
    <name type="ordered locus">RBAM_006420</name>
</gene>
<evidence type="ECO:0000255" key="1">
    <source>
        <dbReference type="HAMAP-Rule" id="MF_01131"/>
    </source>
</evidence>
<comment type="function">
    <text evidence="1">Modulates transcription in response to changes in cellular NADH/NAD(+) redox state.</text>
</comment>
<comment type="subunit">
    <text evidence="1">Homodimer.</text>
</comment>
<comment type="subcellular location">
    <subcellularLocation>
        <location evidence="1">Cytoplasm</location>
    </subcellularLocation>
</comment>
<comment type="similarity">
    <text evidence="1">Belongs to the transcriptional regulatory Rex family.</text>
</comment>
<feature type="chain" id="PRO_1000065383" description="Redox-sensing transcriptional repressor Rex">
    <location>
        <begin position="1"/>
        <end position="215"/>
    </location>
</feature>
<feature type="DNA-binding region" description="H-T-H motif" evidence="1">
    <location>
        <begin position="18"/>
        <end position="57"/>
    </location>
</feature>
<feature type="binding site" evidence="1">
    <location>
        <begin position="92"/>
        <end position="97"/>
    </location>
    <ligand>
        <name>NAD(+)</name>
        <dbReference type="ChEBI" id="CHEBI:57540"/>
    </ligand>
</feature>
<sequence>MNKDQSKIPQATAKRLPLYYRFLKNLHASGKQRVSSAELSDAVKVDSATIRRDFSYFGALGKKGYGYNVDYLLSFFRKTLDQDETTNVILIGVGNLGTAFLHYNFTKNNNTKISMAFDVNQSKIGTEVGGVPVFDLNDLELHIKDEPVAILTVPAVAAQSITDRLVSLGIKGILNFTPARLNVPDHIRIHHIDLAVELQSLVYFLKHYSVLEEIE</sequence>
<dbReference type="EMBL" id="CP000560">
    <property type="protein sequence ID" value="ABS73027.1"/>
    <property type="molecule type" value="Genomic_DNA"/>
</dbReference>
<dbReference type="RefSeq" id="WP_003155984.1">
    <property type="nucleotide sequence ID" value="NC_009725.2"/>
</dbReference>
<dbReference type="SMR" id="A7Z201"/>
<dbReference type="GeneID" id="93079777"/>
<dbReference type="KEGG" id="bay:RBAM_006420"/>
<dbReference type="HOGENOM" id="CLU_061534_1_1_9"/>
<dbReference type="Proteomes" id="UP000001120">
    <property type="component" value="Chromosome"/>
</dbReference>
<dbReference type="GO" id="GO:0005737">
    <property type="term" value="C:cytoplasm"/>
    <property type="evidence" value="ECO:0007669"/>
    <property type="project" value="UniProtKB-SubCell"/>
</dbReference>
<dbReference type="GO" id="GO:0003677">
    <property type="term" value="F:DNA binding"/>
    <property type="evidence" value="ECO:0007669"/>
    <property type="project" value="UniProtKB-UniRule"/>
</dbReference>
<dbReference type="GO" id="GO:0003700">
    <property type="term" value="F:DNA-binding transcription factor activity"/>
    <property type="evidence" value="ECO:0007669"/>
    <property type="project" value="UniProtKB-UniRule"/>
</dbReference>
<dbReference type="GO" id="GO:0045892">
    <property type="term" value="P:negative regulation of DNA-templated transcription"/>
    <property type="evidence" value="ECO:0007669"/>
    <property type="project" value="InterPro"/>
</dbReference>
<dbReference type="GO" id="GO:0051775">
    <property type="term" value="P:response to redox state"/>
    <property type="evidence" value="ECO:0007669"/>
    <property type="project" value="InterPro"/>
</dbReference>
<dbReference type="Gene3D" id="3.40.50.720">
    <property type="entry name" value="NAD(P)-binding Rossmann-like Domain"/>
    <property type="match status" value="1"/>
</dbReference>
<dbReference type="Gene3D" id="1.10.10.10">
    <property type="entry name" value="Winged helix-like DNA-binding domain superfamily/Winged helix DNA-binding domain"/>
    <property type="match status" value="1"/>
</dbReference>
<dbReference type="HAMAP" id="MF_01131">
    <property type="entry name" value="Rex"/>
    <property type="match status" value="1"/>
</dbReference>
<dbReference type="InterPro" id="IPR003781">
    <property type="entry name" value="CoA-bd"/>
</dbReference>
<dbReference type="InterPro" id="IPR036291">
    <property type="entry name" value="NAD(P)-bd_dom_sf"/>
</dbReference>
<dbReference type="InterPro" id="IPR009718">
    <property type="entry name" value="Rex_DNA-bd_C_dom"/>
</dbReference>
<dbReference type="InterPro" id="IPR022876">
    <property type="entry name" value="Tscrpt_rep_Rex"/>
</dbReference>
<dbReference type="InterPro" id="IPR036388">
    <property type="entry name" value="WH-like_DNA-bd_sf"/>
</dbReference>
<dbReference type="InterPro" id="IPR036390">
    <property type="entry name" value="WH_DNA-bd_sf"/>
</dbReference>
<dbReference type="NCBIfam" id="NF003989">
    <property type="entry name" value="PRK05472.1-3"/>
    <property type="match status" value="1"/>
</dbReference>
<dbReference type="NCBIfam" id="NF003991">
    <property type="entry name" value="PRK05472.1-5"/>
    <property type="match status" value="1"/>
</dbReference>
<dbReference type="NCBIfam" id="NF003994">
    <property type="entry name" value="PRK05472.2-3"/>
    <property type="match status" value="1"/>
</dbReference>
<dbReference type="NCBIfam" id="NF003995">
    <property type="entry name" value="PRK05472.2-4"/>
    <property type="match status" value="1"/>
</dbReference>
<dbReference type="NCBIfam" id="NF003996">
    <property type="entry name" value="PRK05472.2-5"/>
    <property type="match status" value="1"/>
</dbReference>
<dbReference type="PANTHER" id="PTHR35786">
    <property type="entry name" value="REDOX-SENSING TRANSCRIPTIONAL REPRESSOR REX"/>
    <property type="match status" value="1"/>
</dbReference>
<dbReference type="PANTHER" id="PTHR35786:SF1">
    <property type="entry name" value="REDOX-SENSING TRANSCRIPTIONAL REPRESSOR REX 1"/>
    <property type="match status" value="1"/>
</dbReference>
<dbReference type="Pfam" id="PF02629">
    <property type="entry name" value="CoA_binding"/>
    <property type="match status" value="1"/>
</dbReference>
<dbReference type="Pfam" id="PF06971">
    <property type="entry name" value="Put_DNA-bind_N"/>
    <property type="match status" value="1"/>
</dbReference>
<dbReference type="SMART" id="SM00881">
    <property type="entry name" value="CoA_binding"/>
    <property type="match status" value="1"/>
</dbReference>
<dbReference type="SUPFAM" id="SSF51735">
    <property type="entry name" value="NAD(P)-binding Rossmann-fold domains"/>
    <property type="match status" value="1"/>
</dbReference>
<dbReference type="SUPFAM" id="SSF46785">
    <property type="entry name" value="Winged helix' DNA-binding domain"/>
    <property type="match status" value="1"/>
</dbReference>
<proteinExistence type="inferred from homology"/>
<keyword id="KW-0963">Cytoplasm</keyword>
<keyword id="KW-0238">DNA-binding</keyword>
<keyword id="KW-0520">NAD</keyword>
<keyword id="KW-0678">Repressor</keyword>
<keyword id="KW-0804">Transcription</keyword>
<keyword id="KW-0805">Transcription regulation</keyword>
<protein>
    <recommendedName>
        <fullName evidence="1">Redox-sensing transcriptional repressor Rex</fullName>
    </recommendedName>
</protein>
<name>REX_BACVZ</name>
<organism>
    <name type="scientific">Bacillus velezensis (strain DSM 23117 / BGSC 10A6 / LMG 26770 / FZB42)</name>
    <name type="common">Bacillus amyloliquefaciens subsp. plantarum</name>
    <dbReference type="NCBI Taxonomy" id="326423"/>
    <lineage>
        <taxon>Bacteria</taxon>
        <taxon>Bacillati</taxon>
        <taxon>Bacillota</taxon>
        <taxon>Bacilli</taxon>
        <taxon>Bacillales</taxon>
        <taxon>Bacillaceae</taxon>
        <taxon>Bacillus</taxon>
        <taxon>Bacillus amyloliquefaciens group</taxon>
    </lineage>
</organism>
<reference key="1">
    <citation type="journal article" date="2007" name="Nat. Biotechnol.">
        <title>Comparative analysis of the complete genome sequence of the plant growth-promoting bacterium Bacillus amyloliquefaciens FZB42.</title>
        <authorList>
            <person name="Chen X.H."/>
            <person name="Koumoutsi A."/>
            <person name="Scholz R."/>
            <person name="Eisenreich A."/>
            <person name="Schneider K."/>
            <person name="Heinemeyer I."/>
            <person name="Morgenstern B."/>
            <person name="Voss B."/>
            <person name="Hess W.R."/>
            <person name="Reva O."/>
            <person name="Junge H."/>
            <person name="Voigt B."/>
            <person name="Jungblut P.R."/>
            <person name="Vater J."/>
            <person name="Suessmuth R."/>
            <person name="Liesegang H."/>
            <person name="Strittmatter A."/>
            <person name="Gottschalk G."/>
            <person name="Borriss R."/>
        </authorList>
    </citation>
    <scope>NUCLEOTIDE SEQUENCE [LARGE SCALE GENOMIC DNA]</scope>
    <source>
        <strain>DSM 23117 / BGSC 10A6 / LMG 26770 / FZB42</strain>
    </source>
</reference>
<accession>A7Z201</accession>